<keyword id="KW-0007">Acetylation</keyword>
<keyword id="KW-0460">Magnesium</keyword>
<keyword id="KW-0464">Manganese</keyword>
<keyword id="KW-0479">Metal-binding</keyword>
<keyword id="KW-0496">Mitochondrion</keyword>
<keyword id="KW-0520">NAD</keyword>
<keyword id="KW-0560">Oxidoreductase</keyword>
<keyword id="KW-0597">Phosphoprotein</keyword>
<keyword id="KW-1185">Reference proteome</keyword>
<keyword id="KW-0809">Transit peptide</keyword>
<keyword id="KW-0816">Tricarboxylic acid cycle</keyword>
<gene>
    <name evidence="1" type="primary">IDH3A</name>
</gene>
<reference key="1">
    <citation type="journal article" date="1995" name="Biochem. J.">
        <title>Isocitrate dehydrogenase from bovine heart: primary structure of subunit 3/4.</title>
        <authorList>
            <person name="Zeng Y."/>
            <person name="Weiss C."/>
            <person name="Yao T.T."/>
            <person name="Huang J."/>
            <person name="Siconolfi-Baez L."/>
            <person name="Hsu P."/>
            <person name="Rushbrook J.I."/>
        </authorList>
    </citation>
    <scope>NUCLEOTIDE SEQUENCE [MRNA]</scope>
    <scope>FUNCTION</scope>
    <scope>CATALYTIC ACTIVITY</scope>
    <source>
        <tissue>Heart</tissue>
    </source>
</reference>
<reference key="2">
    <citation type="journal article" date="1978" name="Biochemistry">
        <title>Nicotinamide adenine dinucleotide dependent isocitrate dehydrogenase from beef heart: subunit heterogeneity and enzyme dissociation.</title>
        <authorList>
            <person name="Rushbrook J.I."/>
            <person name="Harvey R.A."/>
        </authorList>
    </citation>
    <scope>IDENTIFICATION</scope>
    <source>
        <tissue>Heart</tissue>
    </source>
</reference>
<comment type="function">
    <text evidence="3">Catalytic subunit of the enzyme which catalyzes the decarboxylation of isocitrate (ICT) into alpha-ketoglutarate. The heterodimer composed of the alpha (IDH3A) and beta (IDH3B) subunits and the heterodimer composed of the alpha (IDH3A) and gamma (IDH3G) subunits, have considerable basal activity but the full activity of the heterotetramer (containing two subunits of IDH3A, one of IDH3B and one of IDH3G) requires the assembly and cooperative function of both heterodimers.</text>
</comment>
<comment type="catalytic activity">
    <reaction evidence="3">
        <text>D-threo-isocitrate + NAD(+) = 2-oxoglutarate + CO2 + NADH</text>
        <dbReference type="Rhea" id="RHEA:23632"/>
        <dbReference type="ChEBI" id="CHEBI:15562"/>
        <dbReference type="ChEBI" id="CHEBI:16526"/>
        <dbReference type="ChEBI" id="CHEBI:16810"/>
        <dbReference type="ChEBI" id="CHEBI:57540"/>
        <dbReference type="ChEBI" id="CHEBI:57945"/>
        <dbReference type="EC" id="1.1.1.41"/>
    </reaction>
    <physiologicalReaction direction="left-to-right" evidence="3">
        <dbReference type="Rhea" id="RHEA:23633"/>
    </physiologicalReaction>
</comment>
<comment type="cofactor">
    <cofactor evidence="1">
        <name>Mg(2+)</name>
        <dbReference type="ChEBI" id="CHEBI:18420"/>
    </cofactor>
    <cofactor evidence="1">
        <name>Mn(2+)</name>
        <dbReference type="ChEBI" id="CHEBI:29035"/>
    </cofactor>
    <text evidence="1">Divalent metal cations; Mn(2+) or Mg(2+). Activity higher in presence of Mn(2+) than of Mg(2+). Binds 1 Mg(2+) or Mn(2+) ion per subunit.</text>
</comment>
<comment type="activity regulation">
    <text evidence="1">The heterotetramer and the heterodimer composed of IDH3A and IDH3G subunits can be allosterically activated by citrate (CIT) or/and ADP, and the two activators can act independently or synergistically. The heterodimer composed of IDH3A and IDH3B subunits cannot be allosterically regulated and the allosteric regulation of the heterotetramer is through the IDH3G subunit and not the IDH3B subunit. The IDH3G subunit contains the allosteric site which consists of a CIT-binding site and an ADP-binding site, and the binding of CIT and ADP causes conformational changes at the allosteric site which are transmitted to the active site in the catalytic subunit (IDH3A) through a cascade of conformational changes at the heterodimer interface, leading to stabilization of the isocitrate-binding at the active site and thus activation of the enzyme. ATP can activate the heterotetramer and the heterodimer composed of IDH3A and IDH3G subunits at low concentrations but inhibits their activities at high concentrations, whereas ATP exhibits only inhibitory effect on the heterodimer composed of IDH3A and IDH3B subunits.</text>
</comment>
<comment type="subunit">
    <text evidence="1">Heterooligomer of subunits alpha (IDH3A), beta (IDH3B), and gamma (IDH3G) in the apparent ratio of 2:1:1. The heterodimer containing one IDH3A and one IDH3B subunit and the heterodimer containing one IDH3A and one IDH3G subunit assemble into a heterotetramer (which contains two subunits of IDH3A, one of IDH3B and one of IDH3G) and further into the heterooctamer.</text>
</comment>
<comment type="subcellular location">
    <subcellularLocation>
        <location>Mitochondrion</location>
    </subcellularLocation>
</comment>
<comment type="similarity">
    <text evidence="4">Belongs to the isocitrate and isopropylmalate dehydrogenases family.</text>
</comment>
<sequence length="366" mass="39668">MAGPAWISKVSRLLGAFHNQKQVTRGFAGGVKTVTLIPGDGIGPEISAAVMKIFDAAKAPIQWEERNVAAIQGPGGKWMIPPEAKESMDKNKMGLKGPLKTPIAAGHPSMNLLLRKTFDLYANVRPCVSIEGYKTPYHDVNIVTIRENTEGEYSGIEHVIVDGVVQSIKLITEAASKRIAEFAFEYARNNHRSNVTAVHKANIMRMSDGLFLQKCREVAENCKDIKFNEMYLDTVCLNMVQDPSQFDVLVMPNLYGDILSDLCAGLIGGLGVTPSGNIGANGVAIFESVHGTAPDIAGKDMANPTALLLSAVMMLRHMGLFDHAAKIETACFATIKDGKSLTKDLGGNSKCSDFTEEICRRVKDLD</sequence>
<protein>
    <recommendedName>
        <fullName evidence="5">Isocitrate dehydrogenase [NAD] subunit alpha, mitochondrial</fullName>
        <ecNumber evidence="3">1.1.1.41</ecNumber>
    </recommendedName>
    <alternativeName>
        <fullName>Isocitrate dehydrogenase subunits 3/4</fullName>
    </alternativeName>
    <alternativeName>
        <fullName>Isocitric dehydrogenase subunit alpha</fullName>
    </alternativeName>
    <alternativeName>
        <fullName>NAD(+)-specific ICDH subunit alpha</fullName>
    </alternativeName>
</protein>
<feature type="transit peptide" description="Mitochondrion" evidence="1">
    <location>
        <begin position="1"/>
        <end position="27"/>
    </location>
</feature>
<feature type="chain" id="PRO_0000014435" description="Isocitrate dehydrogenase [NAD] subunit alpha, mitochondrial">
    <location>
        <begin position="28"/>
        <end position="366"/>
    </location>
</feature>
<feature type="binding site" evidence="1">
    <location>
        <position position="115"/>
    </location>
    <ligand>
        <name>substrate</name>
    </ligand>
</feature>
<feature type="binding site" evidence="1">
    <location>
        <position position="125"/>
    </location>
    <ligand>
        <name>substrate</name>
    </ligand>
</feature>
<feature type="binding site" evidence="1">
    <location>
        <position position="146"/>
    </location>
    <ligand>
        <name>substrate</name>
    </ligand>
</feature>
<feature type="binding site" evidence="1">
    <location>
        <position position="233"/>
    </location>
    <ligand>
        <name>Mg(2+)</name>
        <dbReference type="ChEBI" id="CHEBI:18420"/>
    </ligand>
</feature>
<feature type="binding site" evidence="1">
    <location>
        <position position="257"/>
    </location>
    <ligand>
        <name>Mg(2+)</name>
        <dbReference type="ChEBI" id="CHEBI:18420"/>
    </ligand>
</feature>
<feature type="binding site" evidence="1">
    <location>
        <position position="261"/>
    </location>
    <ligand>
        <name>Mg(2+)</name>
        <dbReference type="ChEBI" id="CHEBI:18420"/>
    </ligand>
</feature>
<feature type="site" description="Critical for catalysis" evidence="1">
    <location>
        <position position="153"/>
    </location>
</feature>
<feature type="site" description="Critical for catalysis" evidence="1">
    <location>
        <position position="200"/>
    </location>
</feature>
<feature type="modified residue" description="N6-succinyllysine" evidence="2">
    <location>
        <position position="77"/>
    </location>
</feature>
<feature type="modified residue" description="Phosphothreonine" evidence="2">
    <location>
        <position position="101"/>
    </location>
</feature>
<feature type="modified residue" description="N6-acetyllysine" evidence="2">
    <location>
        <position position="223"/>
    </location>
</feature>
<feature type="modified residue" description="N6-acetyllysine; alternate" evidence="1">
    <location>
        <position position="343"/>
    </location>
</feature>
<feature type="modified residue" description="N6-succinyllysine; alternate" evidence="2">
    <location>
        <position position="343"/>
    </location>
</feature>
<feature type="modified residue" description="N6-succinyllysine" evidence="2">
    <location>
        <position position="350"/>
    </location>
</feature>
<organism>
    <name type="scientific">Bos taurus</name>
    <name type="common">Bovine</name>
    <dbReference type="NCBI Taxonomy" id="9913"/>
    <lineage>
        <taxon>Eukaryota</taxon>
        <taxon>Metazoa</taxon>
        <taxon>Chordata</taxon>
        <taxon>Craniata</taxon>
        <taxon>Vertebrata</taxon>
        <taxon>Euteleostomi</taxon>
        <taxon>Mammalia</taxon>
        <taxon>Eutheria</taxon>
        <taxon>Laurasiatheria</taxon>
        <taxon>Artiodactyla</taxon>
        <taxon>Ruminantia</taxon>
        <taxon>Pecora</taxon>
        <taxon>Bovidae</taxon>
        <taxon>Bovinae</taxon>
        <taxon>Bos</taxon>
    </lineage>
</organism>
<name>IDH3A_BOVIN</name>
<dbReference type="EC" id="1.1.1.41" evidence="3"/>
<dbReference type="EMBL" id="U07980">
    <property type="protein sequence ID" value="AAC18425.1"/>
    <property type="molecule type" value="mRNA"/>
</dbReference>
<dbReference type="PIR" id="S58435">
    <property type="entry name" value="S58435"/>
</dbReference>
<dbReference type="RefSeq" id="NP_777069.1">
    <property type="nucleotide sequence ID" value="NM_174644.2"/>
</dbReference>
<dbReference type="SMR" id="P41563"/>
<dbReference type="FunCoup" id="P41563">
    <property type="interactions" value="2199"/>
</dbReference>
<dbReference type="IntAct" id="P41563">
    <property type="interactions" value="1"/>
</dbReference>
<dbReference type="STRING" id="9913.ENSBTAP00000008177"/>
<dbReference type="PaxDb" id="9913-ENSBTAP00000008177"/>
<dbReference type="PeptideAtlas" id="P41563"/>
<dbReference type="GeneID" id="282446"/>
<dbReference type="KEGG" id="bta:282446"/>
<dbReference type="CTD" id="3419"/>
<dbReference type="eggNOG" id="KOG0785">
    <property type="taxonomic scope" value="Eukaryota"/>
</dbReference>
<dbReference type="InParanoid" id="P41563"/>
<dbReference type="OrthoDB" id="10261637at2759"/>
<dbReference type="SABIO-RK" id="P41563"/>
<dbReference type="Proteomes" id="UP000009136">
    <property type="component" value="Unplaced"/>
</dbReference>
<dbReference type="GO" id="GO:0005739">
    <property type="term" value="C:mitochondrion"/>
    <property type="evidence" value="ECO:0000250"/>
    <property type="project" value="AgBase"/>
</dbReference>
<dbReference type="GO" id="GO:0004449">
    <property type="term" value="F:isocitrate dehydrogenase (NAD+) activity"/>
    <property type="evidence" value="ECO:0000250"/>
    <property type="project" value="UniProtKB"/>
</dbReference>
<dbReference type="GO" id="GO:0000287">
    <property type="term" value="F:magnesium ion binding"/>
    <property type="evidence" value="ECO:0000250"/>
    <property type="project" value="UniProtKB"/>
</dbReference>
<dbReference type="GO" id="GO:0051287">
    <property type="term" value="F:NAD binding"/>
    <property type="evidence" value="ECO:0007669"/>
    <property type="project" value="InterPro"/>
</dbReference>
<dbReference type="GO" id="GO:0006102">
    <property type="term" value="P:isocitrate metabolic process"/>
    <property type="evidence" value="ECO:0000318"/>
    <property type="project" value="GO_Central"/>
</dbReference>
<dbReference type="GO" id="GO:0006099">
    <property type="term" value="P:tricarboxylic acid cycle"/>
    <property type="evidence" value="ECO:0000318"/>
    <property type="project" value="GO_Central"/>
</dbReference>
<dbReference type="FunFam" id="3.40.718.10:FF:000003">
    <property type="entry name" value="Isocitrate dehydrogenase [NAD] subunit, mitochondrial"/>
    <property type="match status" value="1"/>
</dbReference>
<dbReference type="Gene3D" id="3.40.718.10">
    <property type="entry name" value="Isopropylmalate Dehydrogenase"/>
    <property type="match status" value="1"/>
</dbReference>
<dbReference type="InterPro" id="IPR019818">
    <property type="entry name" value="IsoCit/isopropylmalate_DH_CS"/>
</dbReference>
<dbReference type="InterPro" id="IPR004434">
    <property type="entry name" value="Isocitrate_DH_NAD"/>
</dbReference>
<dbReference type="InterPro" id="IPR024084">
    <property type="entry name" value="IsoPropMal-DH-like_dom"/>
</dbReference>
<dbReference type="NCBIfam" id="TIGR00175">
    <property type="entry name" value="mito_nad_idh"/>
    <property type="match status" value="1"/>
</dbReference>
<dbReference type="PANTHER" id="PTHR11835">
    <property type="entry name" value="DECARBOXYLATING DEHYDROGENASES-ISOCITRATE, ISOPROPYLMALATE, TARTRATE"/>
    <property type="match status" value="1"/>
</dbReference>
<dbReference type="PANTHER" id="PTHR11835:SF34">
    <property type="entry name" value="ISOCITRATE DEHYDROGENASE [NAD] SUBUNIT ALPHA, MITOCHONDRIAL"/>
    <property type="match status" value="1"/>
</dbReference>
<dbReference type="Pfam" id="PF00180">
    <property type="entry name" value="Iso_dh"/>
    <property type="match status" value="1"/>
</dbReference>
<dbReference type="SMART" id="SM01329">
    <property type="entry name" value="Iso_dh"/>
    <property type="match status" value="1"/>
</dbReference>
<dbReference type="SUPFAM" id="SSF53659">
    <property type="entry name" value="Isocitrate/Isopropylmalate dehydrogenase-like"/>
    <property type="match status" value="1"/>
</dbReference>
<dbReference type="PROSITE" id="PS00470">
    <property type="entry name" value="IDH_IMDH"/>
    <property type="match status" value="1"/>
</dbReference>
<proteinExistence type="evidence at protein level"/>
<accession>P41563</accession>
<evidence type="ECO:0000250" key="1">
    <source>
        <dbReference type="UniProtKB" id="P50213"/>
    </source>
</evidence>
<evidence type="ECO:0000250" key="2">
    <source>
        <dbReference type="UniProtKB" id="Q9D6R2"/>
    </source>
</evidence>
<evidence type="ECO:0000269" key="3">
    <source>
    </source>
</evidence>
<evidence type="ECO:0000305" key="4"/>
<evidence type="ECO:0000305" key="5">
    <source>
    </source>
</evidence>